<sequence>MSDADVSKQIQQMVRFIRQEAEEKANEISVSAEEEFNIEKLQLVEAEKKKIRQEYEKKEKQVEIRKKIEYSMQLNASRIKVLQAQDDVVNAMKESASKDFLNVSHDHHVYKRLLKDLIVQSLVRLKEPGVLLRCRKEDLHLVESVLDSAKEEYASKVNVHPPEIIVDDVHLPPGPSHHHGFFHHHAEAHGPFCSGGVVIASRDGKIVFENTLDARLDVAFNKKLPEIRKWLFGQVAA</sequence>
<feature type="chain" id="PRO_0000117304" description="V-type proton ATPase subunit E">
    <location>
        <begin position="1"/>
        <end position="237"/>
    </location>
</feature>
<proteinExistence type="evidence at transcript level"/>
<accession>O23948</accession>
<name>VATE_GOSHI</name>
<evidence type="ECO:0000250" key="1"/>
<evidence type="ECO:0000305" key="2"/>
<gene>
    <name type="primary">VATE</name>
</gene>
<organism>
    <name type="scientific">Gossypium hirsutum</name>
    <name type="common">Upland cotton</name>
    <name type="synonym">Gossypium mexicanum</name>
    <dbReference type="NCBI Taxonomy" id="3635"/>
    <lineage>
        <taxon>Eukaryota</taxon>
        <taxon>Viridiplantae</taxon>
        <taxon>Streptophyta</taxon>
        <taxon>Embryophyta</taxon>
        <taxon>Tracheophyta</taxon>
        <taxon>Spermatophyta</taxon>
        <taxon>Magnoliopsida</taxon>
        <taxon>eudicotyledons</taxon>
        <taxon>Gunneridae</taxon>
        <taxon>Pentapetalae</taxon>
        <taxon>rosids</taxon>
        <taxon>malvids</taxon>
        <taxon>Malvales</taxon>
        <taxon>Malvaceae</taxon>
        <taxon>Malvoideae</taxon>
        <taxon>Gossypium</taxon>
    </lineage>
</organism>
<protein>
    <recommendedName>
        <fullName>V-type proton ATPase subunit E</fullName>
        <shortName>V-ATPase subunit E</shortName>
    </recommendedName>
    <alternativeName>
        <fullName>Vacuolar proton pump subunit E</fullName>
    </alternativeName>
</protein>
<comment type="function">
    <text evidence="1">Subunit of the peripheral V1 complex of vacuolar ATPase essential for assembly or catalytic function. V-ATPase is responsible for acidifying a variety of intracellular compartments in eukaryotic cells (By similarity).</text>
</comment>
<comment type="subunit">
    <text>V-ATPase is a heteromultimeric enzyme composed of a peripheral catalytic V1 complex (components A to H) attached to an integral membrane V0 proton pore complex (components: a, c, c', c'' and d).</text>
</comment>
<comment type="similarity">
    <text evidence="2">Belongs to the V-ATPase E subunit family.</text>
</comment>
<keyword id="KW-0375">Hydrogen ion transport</keyword>
<keyword id="KW-0406">Ion transport</keyword>
<keyword id="KW-1185">Reference proteome</keyword>
<keyword id="KW-0813">Transport</keyword>
<dbReference type="EMBL" id="AF009338">
    <property type="protein sequence ID" value="AAB72177.1"/>
    <property type="molecule type" value="mRNA"/>
</dbReference>
<dbReference type="PIR" id="T09848">
    <property type="entry name" value="T09848"/>
</dbReference>
<dbReference type="RefSeq" id="NP_001314466.1">
    <property type="nucleotide sequence ID" value="NM_001327537.1"/>
</dbReference>
<dbReference type="SMR" id="O23948"/>
<dbReference type="STRING" id="3635.O23948"/>
<dbReference type="PaxDb" id="3635-O23948"/>
<dbReference type="GeneID" id="107947841"/>
<dbReference type="KEGG" id="ghi:107947841"/>
<dbReference type="OrthoDB" id="41527at41938"/>
<dbReference type="Proteomes" id="UP000189702">
    <property type="component" value="Unplaced"/>
</dbReference>
<dbReference type="GO" id="GO:0033178">
    <property type="term" value="C:proton-transporting two-sector ATPase complex, catalytic domain"/>
    <property type="evidence" value="ECO:0007669"/>
    <property type="project" value="InterPro"/>
</dbReference>
<dbReference type="GO" id="GO:0046961">
    <property type="term" value="F:proton-transporting ATPase activity, rotational mechanism"/>
    <property type="evidence" value="ECO:0000318"/>
    <property type="project" value="GO_Central"/>
</dbReference>
<dbReference type="Gene3D" id="6.10.250.1620">
    <property type="match status" value="1"/>
</dbReference>
<dbReference type="Gene3D" id="3.30.2320.30">
    <property type="entry name" value="ATP synthase, E subunit, C-terminal"/>
    <property type="match status" value="1"/>
</dbReference>
<dbReference type="HAMAP" id="MF_00311">
    <property type="entry name" value="ATP_synth_E_arch"/>
    <property type="match status" value="1"/>
</dbReference>
<dbReference type="InterPro" id="IPR038495">
    <property type="entry name" value="ATPase_E_C"/>
</dbReference>
<dbReference type="InterPro" id="IPR002842">
    <property type="entry name" value="ATPase_V1_Esu"/>
</dbReference>
<dbReference type="PANTHER" id="PTHR45715">
    <property type="entry name" value="ATPASE H+-TRANSPORTING V1 SUBUNIT E1A-RELATED"/>
    <property type="match status" value="1"/>
</dbReference>
<dbReference type="Pfam" id="PF01991">
    <property type="entry name" value="vATP-synt_E"/>
    <property type="match status" value="1"/>
</dbReference>
<dbReference type="SUPFAM" id="SSF160527">
    <property type="entry name" value="V-type ATPase subunit E-like"/>
    <property type="match status" value="1"/>
</dbReference>
<reference key="1">
    <citation type="online journal article" date="1997" name="Plant Gene Register">
        <title>Isolation of a vacuolar H+-ATPase subunit E cDNA from developing cotton (Gossypium hirsutum) fibers.</title>
        <authorList>
            <person name="Kim W."/>
            <person name="Wilkins T.A."/>
        </authorList>
        <locator>PGR97-126</locator>
    </citation>
    <scope>NUCLEOTIDE SEQUENCE [MRNA]</scope>
    <source>
        <strain>cv. Acala SJ2</strain>
        <tissue>Fiber</tissue>
    </source>
</reference>